<reference key="1">
    <citation type="journal article" date="2013" name="Toxicon">
        <title>Cytotoxic activities of [Ser49]phospholipase A(2) from the venom of the saw-scaled vipers Echis ocellatus, Echis pyramidum leakeyi, Echis carinatus sochureki, and Echis coloratus.</title>
        <authorList>
            <person name="Conlon J.M."/>
            <person name="Attoub S."/>
            <person name="Arafat H."/>
            <person name="Mechkarska M."/>
            <person name="Casewell N.R."/>
            <person name="Harrison R.A."/>
            <person name="Calvete J.J."/>
        </authorList>
    </citation>
    <scope>NUCLEOTIDE SEQUENCE [MRNA]</scope>
    <scope>FUNCTION</scope>
    <scope>MASS SPECTROMETRY</scope>
    <scope>SUBCELLULAR LOCATION</scope>
    <source>
        <tissue>Venom</tissue>
        <tissue>Venom gland</tissue>
    </source>
</reference>
<name>PA2HS_ECHCO</name>
<evidence type="ECO:0000250" key="1">
    <source>
        <dbReference type="UniProtKB" id="P24605"/>
    </source>
</evidence>
<evidence type="ECO:0000250" key="2">
    <source>
        <dbReference type="UniProtKB" id="P48650"/>
    </source>
</evidence>
<evidence type="ECO:0000269" key="3">
    <source>
    </source>
</evidence>
<evidence type="ECO:0000303" key="4">
    <source>
    </source>
</evidence>
<evidence type="ECO:0000305" key="5"/>
<evidence type="ECO:0000305" key="6">
    <source>
    </source>
</evidence>
<proteinExistence type="evidence at protein level"/>
<protein>
    <recommendedName>
        <fullName evidence="4">Phospholipase A2 homolog ECO_00035</fullName>
        <shortName>svPLA2 homolog</shortName>
    </recommendedName>
</protein>
<feature type="chain" id="PRO_0000432598" description="Phospholipase A2 homolog ECO_00035">
    <location>
        <begin position="1"/>
        <end position="121"/>
    </location>
</feature>
<feature type="region of interest" description="Important for membrane-damaging activities in eukaryotes and bacteria; heparin-binding" evidence="1">
    <location>
        <begin position="104"/>
        <end position="116"/>
    </location>
</feature>
<feature type="disulfide bond" evidence="2">
    <location>
        <begin position="25"/>
        <end position="114"/>
    </location>
</feature>
<feature type="disulfide bond" evidence="2">
    <location>
        <begin position="27"/>
        <end position="43"/>
    </location>
</feature>
<feature type="disulfide bond" evidence="2">
    <location>
        <begin position="42"/>
        <end position="94"/>
    </location>
</feature>
<feature type="disulfide bond" evidence="2">
    <location>
        <begin position="48"/>
        <end position="121"/>
    </location>
</feature>
<feature type="disulfide bond" evidence="2">
    <location>
        <begin position="49"/>
        <end position="87"/>
    </location>
</feature>
<feature type="disulfide bond" evidence="2">
    <location>
        <begin position="56"/>
        <end position="80"/>
    </location>
</feature>
<feature type="disulfide bond" evidence="2">
    <location>
        <begin position="74"/>
        <end position="85"/>
    </location>
</feature>
<feature type="sequence variant" evidence="6">
    <original>A</original>
    <variation>V</variation>
    <location>
        <position position="18"/>
    </location>
</feature>
<keyword id="KW-1015">Disulfide bond</keyword>
<keyword id="KW-0959">Myotoxin</keyword>
<keyword id="KW-0964">Secreted</keyword>
<keyword id="KW-0800">Toxin</keyword>
<organism>
    <name type="scientific">Echis coloratus</name>
    <name type="common">Carpet viper</name>
    <dbReference type="NCBI Taxonomy" id="64175"/>
    <lineage>
        <taxon>Eukaryota</taxon>
        <taxon>Metazoa</taxon>
        <taxon>Chordata</taxon>
        <taxon>Craniata</taxon>
        <taxon>Vertebrata</taxon>
        <taxon>Euteleostomi</taxon>
        <taxon>Lepidosauria</taxon>
        <taxon>Squamata</taxon>
        <taxon>Bifurcata</taxon>
        <taxon>Unidentata</taxon>
        <taxon>Episquamata</taxon>
        <taxon>Toxicofera</taxon>
        <taxon>Serpentes</taxon>
        <taxon>Colubroidea</taxon>
        <taxon>Viperidae</taxon>
        <taxon>Viperinae</taxon>
        <taxon>Echis</taxon>
    </lineage>
</organism>
<sequence length="121" mass="13706">SVIELGKMIVQLTNKTPASYVSYGCFCGGGDRGKPKDATDRCCFVHSCCYDTLPDCSPKTDQYKYKWENGEIICENSTSCKKRICECDKAVAICLRENLKTYNKKYKIYPNILCRGEPDKC</sequence>
<dbReference type="SMR" id="P0DMT3"/>
<dbReference type="GO" id="GO:0005576">
    <property type="term" value="C:extracellular region"/>
    <property type="evidence" value="ECO:0007669"/>
    <property type="project" value="UniProtKB-SubCell"/>
</dbReference>
<dbReference type="GO" id="GO:0005509">
    <property type="term" value="F:calcium ion binding"/>
    <property type="evidence" value="ECO:0007669"/>
    <property type="project" value="InterPro"/>
</dbReference>
<dbReference type="GO" id="GO:0047498">
    <property type="term" value="F:calcium-dependent phospholipase A2 activity"/>
    <property type="evidence" value="ECO:0007669"/>
    <property type="project" value="TreeGrafter"/>
</dbReference>
<dbReference type="GO" id="GO:0005543">
    <property type="term" value="F:phospholipid binding"/>
    <property type="evidence" value="ECO:0007669"/>
    <property type="project" value="TreeGrafter"/>
</dbReference>
<dbReference type="GO" id="GO:0090729">
    <property type="term" value="F:toxin activity"/>
    <property type="evidence" value="ECO:0007669"/>
    <property type="project" value="UniProtKB-KW"/>
</dbReference>
<dbReference type="GO" id="GO:0050482">
    <property type="term" value="P:arachidonate secretion"/>
    <property type="evidence" value="ECO:0007669"/>
    <property type="project" value="InterPro"/>
</dbReference>
<dbReference type="GO" id="GO:0016042">
    <property type="term" value="P:lipid catabolic process"/>
    <property type="evidence" value="ECO:0007669"/>
    <property type="project" value="InterPro"/>
</dbReference>
<dbReference type="GO" id="GO:0042130">
    <property type="term" value="P:negative regulation of T cell proliferation"/>
    <property type="evidence" value="ECO:0007669"/>
    <property type="project" value="TreeGrafter"/>
</dbReference>
<dbReference type="GO" id="GO:0006644">
    <property type="term" value="P:phospholipid metabolic process"/>
    <property type="evidence" value="ECO:0007669"/>
    <property type="project" value="InterPro"/>
</dbReference>
<dbReference type="CDD" id="cd00125">
    <property type="entry name" value="PLA2c"/>
    <property type="match status" value="1"/>
</dbReference>
<dbReference type="FunFam" id="1.20.90.10:FF:000001">
    <property type="entry name" value="Basic phospholipase A2 homolog"/>
    <property type="match status" value="1"/>
</dbReference>
<dbReference type="Gene3D" id="1.20.90.10">
    <property type="entry name" value="Phospholipase A2 domain"/>
    <property type="match status" value="1"/>
</dbReference>
<dbReference type="InterPro" id="IPR001211">
    <property type="entry name" value="PLipase_A2"/>
</dbReference>
<dbReference type="InterPro" id="IPR033112">
    <property type="entry name" value="PLipase_A2_Asp_AS"/>
</dbReference>
<dbReference type="InterPro" id="IPR016090">
    <property type="entry name" value="PLipase_A2_dom"/>
</dbReference>
<dbReference type="InterPro" id="IPR036444">
    <property type="entry name" value="PLipase_A2_dom_sf"/>
</dbReference>
<dbReference type="InterPro" id="IPR033113">
    <property type="entry name" value="PLipase_A2_His_AS"/>
</dbReference>
<dbReference type="PANTHER" id="PTHR11716">
    <property type="entry name" value="PHOSPHOLIPASE A2 FAMILY MEMBER"/>
    <property type="match status" value="1"/>
</dbReference>
<dbReference type="PANTHER" id="PTHR11716:SF9">
    <property type="entry name" value="PHOSPHOLIPASE A2, MEMBRANE ASSOCIATED"/>
    <property type="match status" value="1"/>
</dbReference>
<dbReference type="Pfam" id="PF00068">
    <property type="entry name" value="Phospholip_A2_1"/>
    <property type="match status" value="1"/>
</dbReference>
<dbReference type="PRINTS" id="PR00389">
    <property type="entry name" value="PHPHLIPASEA2"/>
</dbReference>
<dbReference type="SMART" id="SM00085">
    <property type="entry name" value="PA2c"/>
    <property type="match status" value="1"/>
</dbReference>
<dbReference type="SUPFAM" id="SSF48619">
    <property type="entry name" value="Phospholipase A2, PLA2"/>
    <property type="match status" value="1"/>
</dbReference>
<dbReference type="PROSITE" id="PS00119">
    <property type="entry name" value="PA2_ASP"/>
    <property type="match status" value="1"/>
</dbReference>
<dbReference type="PROSITE" id="PS00118">
    <property type="entry name" value="PA2_HIS"/>
    <property type="match status" value="1"/>
</dbReference>
<accession>P0DMT3</accession>
<comment type="function">
    <text evidence="2 3">Snake venom phospholipase A2 homolog that lacks enzymatic activity (By similarity). Shows high myotoxin activities and displays edema-inducing activities (By similarity). Has cytotoxic activities against HUVEC cells (LC(50)=4.9 uL) and human lung adenocarcinoma A549 cells (LC(50)=3.5 uL) (PubMed:23747272).</text>
</comment>
<comment type="subunit">
    <text evidence="2">Monomer.</text>
</comment>
<comment type="subcellular location">
    <subcellularLocation>
        <location evidence="3">Secreted</location>
    </subcellularLocation>
</comment>
<comment type="tissue specificity">
    <text evidence="6">Expressed by the venom gland.</text>
</comment>
<comment type="mass spectrometry" mass="13692.0" method="Electrospray" evidence="3"/>
<comment type="mass spectrometry" mass="13720.0" method="Electrospray" evidence="3">
    <text>In variant Val-18.</text>
</comment>
<comment type="miscellaneous">
    <text evidence="3">Negative results: does not show antimicrobial activity against E.coli and S.aureus and does not produce appreciable hemolysis on human erythrocytes.</text>
</comment>
<comment type="similarity">
    <text evidence="5">Belongs to the phospholipase A2 family. Group II subfamily. S49 sub-subfamily.</text>
</comment>
<comment type="caution">
    <text evidence="5">Does not bind calcium as one of the calcium-binding sites is lost (Asp-&gt;Ser in position 47, which corresponds to 'Ser-49' in the current nomenclature).</text>
</comment>